<gene>
    <name type="primary">aldo-2</name>
    <name type="ORF">F01F1.12</name>
</gene>
<accession>P46563</accession>
<sequence>MATVGGAFKDSLTQAQKDELHQIALKIVQDGKGILAADESTGTIGKRLDAINLENNETNRQKYRQLLFTTPNLNQHISGVILYEETFHQSTDKGEKFTDLLIKQGIVPGIKLDLGVVPLAGTIGEGTTQGLDKLAERAAAFKKGGCGFAKWRCVLNIGTHTPSHLGMLENANVLARYASICQANGLVPIVEPEVLCDGEHDLARAQKVTEQVLAFVYKALADHHVYLEGTLLKPNMVTPGQSSASKASHEAIGLATVTALRRGVPAAVPGITFLSGGQSELDATANLNAINSVQLGKPWKLTFSYGRALQASVLKAWGGKDENIAAAQKTLLHRSKANGDASLGKYAGEDAAGAAAESLFVAKHSY</sequence>
<feature type="chain" id="PRO_0000216929" description="Fructose-bisphosphate aldolase 2">
    <location>
        <begin position="1"/>
        <end position="366"/>
    </location>
</feature>
<feature type="active site" description="Proton acceptor" evidence="1">
    <location>
        <position position="191"/>
    </location>
</feature>
<feature type="active site" description="Schiff-base intermediate with dihydroxyacetone-P" evidence="1">
    <location>
        <position position="233"/>
    </location>
</feature>
<feature type="binding site" evidence="1">
    <location>
        <position position="60"/>
    </location>
    <ligand>
        <name>substrate</name>
    </ligand>
</feature>
<feature type="binding site" evidence="1">
    <location>
        <position position="150"/>
    </location>
    <ligand>
        <name>substrate</name>
    </ligand>
</feature>
<feature type="site" description="Necessary for preference for fructose 1,6-bisphosphate over fructose 1-phosphate">
    <location>
        <position position="366"/>
    </location>
</feature>
<name>ALF2_CAEEL</name>
<keyword id="KW-0324">Glycolysis</keyword>
<keyword id="KW-0456">Lyase</keyword>
<keyword id="KW-1185">Reference proteome</keyword>
<keyword id="KW-0704">Schiff base</keyword>
<reference key="1">
    <citation type="journal article" date="1997" name="Arch. Biochem. Biophys.">
        <title>Caenorhabditis elegans has two isozymic forms, CE-1 and CE-2, of fructose-1,6-bisphosphate aldolase which are encoded by different genes.</title>
        <authorList>
            <person name="Inoue T."/>
            <person name="Yatsuki H."/>
            <person name="Kusakabe T."/>
            <person name="Joh K."/>
            <person name="Hori K."/>
        </authorList>
    </citation>
    <scope>NUCLEOTIDE SEQUENCE [MRNA]</scope>
    <source>
        <strain>Bristol N2</strain>
    </source>
</reference>
<reference key="2">
    <citation type="journal article" date="1998" name="Science">
        <title>Genome sequence of the nematode C. elegans: a platform for investigating biology.</title>
        <authorList>
            <consortium name="The C. elegans sequencing consortium"/>
        </authorList>
    </citation>
    <scope>NUCLEOTIDE SEQUENCE [LARGE SCALE GENOMIC DNA]</scope>
    <source>
        <strain>Bristol N2</strain>
    </source>
</reference>
<protein>
    <recommendedName>
        <fullName>Fructose-bisphosphate aldolase 2</fullName>
        <ecNumber>4.1.2.13</ecNumber>
    </recommendedName>
    <alternativeName>
        <fullName>Aldolase CE-2</fullName>
        <shortName>CE2</shortName>
    </alternativeName>
</protein>
<evidence type="ECO:0000250" key="1"/>
<evidence type="ECO:0000305" key="2"/>
<organism>
    <name type="scientific">Caenorhabditis elegans</name>
    <dbReference type="NCBI Taxonomy" id="6239"/>
    <lineage>
        <taxon>Eukaryota</taxon>
        <taxon>Metazoa</taxon>
        <taxon>Ecdysozoa</taxon>
        <taxon>Nematoda</taxon>
        <taxon>Chromadorea</taxon>
        <taxon>Rhabditida</taxon>
        <taxon>Rhabditina</taxon>
        <taxon>Rhabditomorpha</taxon>
        <taxon>Rhabditoidea</taxon>
        <taxon>Rhabditidae</taxon>
        <taxon>Peloderinae</taxon>
        <taxon>Caenorhabditis</taxon>
    </lineage>
</organism>
<proteinExistence type="evidence at transcript level"/>
<dbReference type="EC" id="4.1.2.13"/>
<dbReference type="EMBL" id="D83739">
    <property type="protein sequence ID" value="BAA12092.1"/>
    <property type="molecule type" value="mRNA"/>
</dbReference>
<dbReference type="EMBL" id="FO080705">
    <property type="protein sequence ID" value="CCD65997.1"/>
    <property type="molecule type" value="Genomic_DNA"/>
</dbReference>
<dbReference type="PIR" id="T15951">
    <property type="entry name" value="T15951"/>
</dbReference>
<dbReference type="RefSeq" id="NP_001021240.1">
    <property type="nucleotide sequence ID" value="NM_001026069.8"/>
</dbReference>
<dbReference type="SMR" id="P46563"/>
<dbReference type="BioGRID" id="41049">
    <property type="interactions" value="45"/>
</dbReference>
<dbReference type="DIP" id="DIP-24398N"/>
<dbReference type="FunCoup" id="P46563">
    <property type="interactions" value="813"/>
</dbReference>
<dbReference type="IntAct" id="P46563">
    <property type="interactions" value="4"/>
</dbReference>
<dbReference type="STRING" id="6239.F01F1.12a.1"/>
<dbReference type="iPTMnet" id="P46563"/>
<dbReference type="PaxDb" id="6239-F01F1.12a.1"/>
<dbReference type="PeptideAtlas" id="P46563"/>
<dbReference type="EnsemblMetazoa" id="F01F1.12.1">
    <property type="protein sequence ID" value="F01F1.12.1"/>
    <property type="gene ID" value="WBGene00017166"/>
</dbReference>
<dbReference type="EnsemblMetazoa" id="F01F1.12.2">
    <property type="protein sequence ID" value="F01F1.12.2"/>
    <property type="gene ID" value="WBGene00017166"/>
</dbReference>
<dbReference type="GeneID" id="175827"/>
<dbReference type="KEGG" id="cel:CELE_F01F1.12"/>
<dbReference type="UCSC" id="F01F1.12a">
    <property type="organism name" value="c. elegans"/>
</dbReference>
<dbReference type="AGR" id="WB:WBGene00017166"/>
<dbReference type="CTD" id="175827"/>
<dbReference type="WormBase" id="F01F1.12">
    <property type="protein sequence ID" value="CE01225"/>
    <property type="gene ID" value="WBGene00017166"/>
    <property type="gene designation" value="aldo-2"/>
</dbReference>
<dbReference type="eggNOG" id="KOG1557">
    <property type="taxonomic scope" value="Eukaryota"/>
</dbReference>
<dbReference type="GeneTree" id="ENSGT00950000182987"/>
<dbReference type="HOGENOM" id="CLU_031243_0_0_1"/>
<dbReference type="InParanoid" id="P46563"/>
<dbReference type="OMA" id="FHQSTDK"/>
<dbReference type="OrthoDB" id="36455at2759"/>
<dbReference type="PhylomeDB" id="P46563"/>
<dbReference type="Reactome" id="R-CEL-114608">
    <property type="pathway name" value="Platelet degranulation"/>
</dbReference>
<dbReference type="Reactome" id="R-CEL-6798695">
    <property type="pathway name" value="Neutrophil degranulation"/>
</dbReference>
<dbReference type="Reactome" id="R-CEL-70171">
    <property type="pathway name" value="Glycolysis"/>
</dbReference>
<dbReference type="Reactome" id="R-CEL-70263">
    <property type="pathway name" value="Gluconeogenesis"/>
</dbReference>
<dbReference type="SignaLink" id="P46563"/>
<dbReference type="UniPathway" id="UPA00109">
    <property type="reaction ID" value="UER00183"/>
</dbReference>
<dbReference type="PRO" id="PR:P46563"/>
<dbReference type="Proteomes" id="UP000001940">
    <property type="component" value="Chromosome III"/>
</dbReference>
<dbReference type="Bgee" id="WBGene00017166">
    <property type="expression patterns" value="Expressed in embryo and 4 other cell types or tissues"/>
</dbReference>
<dbReference type="GO" id="GO:0005737">
    <property type="term" value="C:cytoplasm"/>
    <property type="evidence" value="ECO:0000250"/>
    <property type="project" value="WormBase"/>
</dbReference>
<dbReference type="GO" id="GO:0005829">
    <property type="term" value="C:cytosol"/>
    <property type="evidence" value="ECO:0000318"/>
    <property type="project" value="GO_Central"/>
</dbReference>
<dbReference type="GO" id="GO:0000792">
    <property type="term" value="C:heterochromatin"/>
    <property type="evidence" value="ECO:0000250"/>
    <property type="project" value="WormBase"/>
</dbReference>
<dbReference type="GO" id="GO:0004332">
    <property type="term" value="F:fructose-bisphosphate aldolase activity"/>
    <property type="evidence" value="ECO:0000250"/>
    <property type="project" value="WormBase"/>
</dbReference>
<dbReference type="GO" id="GO:0030388">
    <property type="term" value="P:fructose 1,6-bisphosphate metabolic process"/>
    <property type="evidence" value="ECO:0000318"/>
    <property type="project" value="GO_Central"/>
</dbReference>
<dbReference type="GO" id="GO:0006096">
    <property type="term" value="P:glycolytic process"/>
    <property type="evidence" value="ECO:0000318"/>
    <property type="project" value="GO_Central"/>
</dbReference>
<dbReference type="CDD" id="cd00948">
    <property type="entry name" value="FBP_aldolase_I_a"/>
    <property type="match status" value="1"/>
</dbReference>
<dbReference type="FunFam" id="3.20.20.70:FF:000330">
    <property type="entry name" value="Fructose-bisphosphate aldolase"/>
    <property type="match status" value="1"/>
</dbReference>
<dbReference type="Gene3D" id="3.20.20.70">
    <property type="entry name" value="Aldolase class I"/>
    <property type="match status" value="1"/>
</dbReference>
<dbReference type="InterPro" id="IPR029768">
    <property type="entry name" value="Aldolase_I_AS"/>
</dbReference>
<dbReference type="InterPro" id="IPR013785">
    <property type="entry name" value="Aldolase_TIM"/>
</dbReference>
<dbReference type="InterPro" id="IPR000741">
    <property type="entry name" value="FBA_I"/>
</dbReference>
<dbReference type="NCBIfam" id="NF033379">
    <property type="entry name" value="FrucBisAld_I"/>
    <property type="match status" value="1"/>
</dbReference>
<dbReference type="PANTHER" id="PTHR11627">
    <property type="entry name" value="FRUCTOSE-BISPHOSPHATE ALDOLASE"/>
    <property type="match status" value="1"/>
</dbReference>
<dbReference type="Pfam" id="PF00274">
    <property type="entry name" value="Glycolytic"/>
    <property type="match status" value="1"/>
</dbReference>
<dbReference type="SUPFAM" id="SSF51569">
    <property type="entry name" value="Aldolase"/>
    <property type="match status" value="1"/>
</dbReference>
<dbReference type="PROSITE" id="PS00158">
    <property type="entry name" value="ALDOLASE_CLASS_I"/>
    <property type="match status" value="1"/>
</dbReference>
<comment type="catalytic activity">
    <reaction>
        <text>beta-D-fructose 1,6-bisphosphate = D-glyceraldehyde 3-phosphate + dihydroxyacetone phosphate</text>
        <dbReference type="Rhea" id="RHEA:14729"/>
        <dbReference type="ChEBI" id="CHEBI:32966"/>
        <dbReference type="ChEBI" id="CHEBI:57642"/>
        <dbReference type="ChEBI" id="CHEBI:59776"/>
        <dbReference type="EC" id="4.1.2.13"/>
    </reaction>
</comment>
<comment type="pathway">
    <text>Carbohydrate degradation; glycolysis; D-glyceraldehyde 3-phosphate and glycerone phosphate from D-glucose: step 4/4.</text>
</comment>
<comment type="developmental stage">
    <text>Restricted to the embryo and early larval stages.</text>
</comment>
<comment type="similarity">
    <text evidence="2">Belongs to the class I fructose-bisphosphate aldolase family.</text>
</comment>